<reference key="1">
    <citation type="journal article" date="2000" name="Nature">
        <title>Sequence and analysis of chromosome 3 of the plant Arabidopsis thaliana.</title>
        <authorList>
            <person name="Salanoubat M."/>
            <person name="Lemcke K."/>
            <person name="Rieger M."/>
            <person name="Ansorge W."/>
            <person name="Unseld M."/>
            <person name="Fartmann B."/>
            <person name="Valle G."/>
            <person name="Bloecker H."/>
            <person name="Perez-Alonso M."/>
            <person name="Obermaier B."/>
            <person name="Delseny M."/>
            <person name="Boutry M."/>
            <person name="Grivell L.A."/>
            <person name="Mache R."/>
            <person name="Puigdomenech P."/>
            <person name="De Simone V."/>
            <person name="Choisne N."/>
            <person name="Artiguenave F."/>
            <person name="Robert C."/>
            <person name="Brottier P."/>
            <person name="Wincker P."/>
            <person name="Cattolico L."/>
            <person name="Weissenbach J."/>
            <person name="Saurin W."/>
            <person name="Quetier F."/>
            <person name="Schaefer M."/>
            <person name="Mueller-Auer S."/>
            <person name="Gabel C."/>
            <person name="Fuchs M."/>
            <person name="Benes V."/>
            <person name="Wurmbach E."/>
            <person name="Drzonek H."/>
            <person name="Erfle H."/>
            <person name="Jordan N."/>
            <person name="Bangert S."/>
            <person name="Wiedelmann R."/>
            <person name="Kranz H."/>
            <person name="Voss H."/>
            <person name="Holland R."/>
            <person name="Brandt P."/>
            <person name="Nyakatura G."/>
            <person name="Vezzi A."/>
            <person name="D'Angelo M."/>
            <person name="Pallavicini A."/>
            <person name="Toppo S."/>
            <person name="Simionati B."/>
            <person name="Conrad A."/>
            <person name="Hornischer K."/>
            <person name="Kauer G."/>
            <person name="Loehnert T.-H."/>
            <person name="Nordsiek G."/>
            <person name="Reichelt J."/>
            <person name="Scharfe M."/>
            <person name="Schoen O."/>
            <person name="Bargues M."/>
            <person name="Terol J."/>
            <person name="Climent J."/>
            <person name="Navarro P."/>
            <person name="Collado C."/>
            <person name="Perez-Perez A."/>
            <person name="Ottenwaelder B."/>
            <person name="Duchemin D."/>
            <person name="Cooke R."/>
            <person name="Laudie M."/>
            <person name="Berger-Llauro C."/>
            <person name="Purnelle B."/>
            <person name="Masuy D."/>
            <person name="de Haan M."/>
            <person name="Maarse A.C."/>
            <person name="Alcaraz J.-P."/>
            <person name="Cottet A."/>
            <person name="Casacuberta E."/>
            <person name="Monfort A."/>
            <person name="Argiriou A."/>
            <person name="Flores M."/>
            <person name="Liguori R."/>
            <person name="Vitale D."/>
            <person name="Mannhaupt G."/>
            <person name="Haase D."/>
            <person name="Schoof H."/>
            <person name="Rudd S."/>
            <person name="Zaccaria P."/>
            <person name="Mewes H.-W."/>
            <person name="Mayer K.F.X."/>
            <person name="Kaul S."/>
            <person name="Town C.D."/>
            <person name="Koo H.L."/>
            <person name="Tallon L.J."/>
            <person name="Jenkins J."/>
            <person name="Rooney T."/>
            <person name="Rizzo M."/>
            <person name="Walts A."/>
            <person name="Utterback T."/>
            <person name="Fujii C.Y."/>
            <person name="Shea T.P."/>
            <person name="Creasy T.H."/>
            <person name="Haas B."/>
            <person name="Maiti R."/>
            <person name="Wu D."/>
            <person name="Peterson J."/>
            <person name="Van Aken S."/>
            <person name="Pai G."/>
            <person name="Militscher J."/>
            <person name="Sellers P."/>
            <person name="Gill J.E."/>
            <person name="Feldblyum T.V."/>
            <person name="Preuss D."/>
            <person name="Lin X."/>
            <person name="Nierman W.C."/>
            <person name="Salzberg S.L."/>
            <person name="White O."/>
            <person name="Venter J.C."/>
            <person name="Fraser C.M."/>
            <person name="Kaneko T."/>
            <person name="Nakamura Y."/>
            <person name="Sato S."/>
            <person name="Kato T."/>
            <person name="Asamizu E."/>
            <person name="Sasamoto S."/>
            <person name="Kimura T."/>
            <person name="Idesawa K."/>
            <person name="Kawashima K."/>
            <person name="Kishida Y."/>
            <person name="Kiyokawa C."/>
            <person name="Kohara M."/>
            <person name="Matsumoto M."/>
            <person name="Matsuno A."/>
            <person name="Muraki A."/>
            <person name="Nakayama S."/>
            <person name="Nakazaki N."/>
            <person name="Shinpo S."/>
            <person name="Takeuchi C."/>
            <person name="Wada T."/>
            <person name="Watanabe A."/>
            <person name="Yamada M."/>
            <person name="Yasuda M."/>
            <person name="Tabata S."/>
        </authorList>
    </citation>
    <scope>NUCLEOTIDE SEQUENCE [LARGE SCALE GENOMIC DNA]</scope>
    <source>
        <strain>cv. Columbia</strain>
    </source>
</reference>
<reference key="2">
    <citation type="journal article" date="2017" name="Plant J.">
        <title>Araport11: a complete reannotation of the Arabidopsis thaliana reference genome.</title>
        <authorList>
            <person name="Cheng C.Y."/>
            <person name="Krishnakumar V."/>
            <person name="Chan A.P."/>
            <person name="Thibaud-Nissen F."/>
            <person name="Schobel S."/>
            <person name="Town C.D."/>
        </authorList>
    </citation>
    <scope>GENOME REANNOTATION</scope>
    <source>
        <strain>cv. Columbia</strain>
    </source>
</reference>
<reference key="3">
    <citation type="journal article" date="2005" name="J. Biol. Chem.">
        <title>Cullins 3a and 3b assemble with members of the broad complex/tramtrack/bric-a-brac (BTB) protein family to form essential ubiquitin-protein ligases (E3s) in Arabidopsis.</title>
        <authorList>
            <person name="Gingerich D.J."/>
            <person name="Gagne J.M."/>
            <person name="Salter D.W."/>
            <person name="Hellmann H."/>
            <person name="Estelle M."/>
            <person name="Ma L."/>
            <person name="Vierstra R.D."/>
        </authorList>
    </citation>
    <scope>DOMAIN BTB</scope>
</reference>
<feature type="chain" id="PRO_0000409573" description="BTB/POZ domain-containing protein At3g08570">
    <location>
        <begin position="1"/>
        <end position="617"/>
    </location>
</feature>
<feature type="domain" description="BTB" evidence="3">
    <location>
        <begin position="36"/>
        <end position="106"/>
    </location>
</feature>
<feature type="domain" description="NPH3" evidence="4">
    <location>
        <begin position="210"/>
        <end position="490"/>
    </location>
</feature>
<feature type="region of interest" description="Disordered" evidence="5">
    <location>
        <begin position="505"/>
        <end position="525"/>
    </location>
</feature>
<feature type="region of interest" description="Disordered" evidence="5">
    <location>
        <begin position="585"/>
        <end position="617"/>
    </location>
</feature>
<feature type="compositionally biased region" description="Basic and acidic residues" evidence="5">
    <location>
        <begin position="602"/>
        <end position="617"/>
    </location>
</feature>
<feature type="modified residue" description="Phosphotyrosine" evidence="2">
    <location>
        <position position="431"/>
    </location>
</feature>
<accession>Q9C9Z7</accession>
<accession>F4IX97</accession>
<organism>
    <name type="scientific">Arabidopsis thaliana</name>
    <name type="common">Mouse-ear cress</name>
    <dbReference type="NCBI Taxonomy" id="3702"/>
    <lineage>
        <taxon>Eukaryota</taxon>
        <taxon>Viridiplantae</taxon>
        <taxon>Streptophyta</taxon>
        <taxon>Embryophyta</taxon>
        <taxon>Tracheophyta</taxon>
        <taxon>Spermatophyta</taxon>
        <taxon>Magnoliopsida</taxon>
        <taxon>eudicotyledons</taxon>
        <taxon>Gunneridae</taxon>
        <taxon>Pentapetalae</taxon>
        <taxon>rosids</taxon>
        <taxon>malvids</taxon>
        <taxon>Brassicales</taxon>
        <taxon>Brassicaceae</taxon>
        <taxon>Camelineae</taxon>
        <taxon>Arabidopsis</taxon>
    </lineage>
</organism>
<dbReference type="EMBL" id="AC012562">
    <property type="protein sequence ID" value="AAG51355.1"/>
    <property type="status" value="ALT_SEQ"/>
    <property type="molecule type" value="Genomic_DNA"/>
</dbReference>
<dbReference type="EMBL" id="CP002686">
    <property type="protein sequence ID" value="AEE74647.1"/>
    <property type="molecule type" value="Genomic_DNA"/>
</dbReference>
<dbReference type="RefSeq" id="NP_187469.4">
    <property type="nucleotide sequence ID" value="NM_111691.5"/>
</dbReference>
<dbReference type="SMR" id="Q9C9Z7"/>
<dbReference type="FunCoup" id="Q9C9Z7">
    <property type="interactions" value="284"/>
</dbReference>
<dbReference type="GlyGen" id="Q9C9Z7">
    <property type="glycosylation" value="3 sites, 1 O-linked glycan (2 sites)"/>
</dbReference>
<dbReference type="PaxDb" id="3702-AT3G08570.1"/>
<dbReference type="ProteomicsDB" id="242366"/>
<dbReference type="EnsemblPlants" id="AT3G08570.1">
    <property type="protein sequence ID" value="AT3G08570.1"/>
    <property type="gene ID" value="AT3G08570"/>
</dbReference>
<dbReference type="GeneID" id="820004"/>
<dbReference type="Gramene" id="AT3G08570.1">
    <property type="protein sequence ID" value="AT3G08570.1"/>
    <property type="gene ID" value="AT3G08570"/>
</dbReference>
<dbReference type="KEGG" id="ath:AT3G08570"/>
<dbReference type="Araport" id="AT3G08570"/>
<dbReference type="TAIR" id="AT3G08570"/>
<dbReference type="eggNOG" id="ENOG502QRW3">
    <property type="taxonomic scope" value="Eukaryota"/>
</dbReference>
<dbReference type="HOGENOM" id="CLU_005994_6_0_1"/>
<dbReference type="InParanoid" id="Q9C9Z7"/>
<dbReference type="OMA" id="VCMKQGM"/>
<dbReference type="OrthoDB" id="624345at2759"/>
<dbReference type="UniPathway" id="UPA00143"/>
<dbReference type="PRO" id="PR:Q9C9Z7"/>
<dbReference type="Proteomes" id="UP000006548">
    <property type="component" value="Chromosome 3"/>
</dbReference>
<dbReference type="ExpressionAtlas" id="Q9C9Z7">
    <property type="expression patterns" value="baseline and differential"/>
</dbReference>
<dbReference type="GO" id="GO:0016567">
    <property type="term" value="P:protein ubiquitination"/>
    <property type="evidence" value="ECO:0007669"/>
    <property type="project" value="UniProtKB-UniPathway"/>
</dbReference>
<dbReference type="Gene3D" id="3.30.710.10">
    <property type="entry name" value="Potassium Channel Kv1.1, Chain A"/>
    <property type="match status" value="1"/>
</dbReference>
<dbReference type="InterPro" id="IPR000210">
    <property type="entry name" value="BTB/POZ_dom"/>
</dbReference>
<dbReference type="InterPro" id="IPR043454">
    <property type="entry name" value="NPH3/RPT2-like"/>
</dbReference>
<dbReference type="InterPro" id="IPR027356">
    <property type="entry name" value="NPH3_dom"/>
</dbReference>
<dbReference type="InterPro" id="IPR011333">
    <property type="entry name" value="SKP1/BTB/POZ_sf"/>
</dbReference>
<dbReference type="PANTHER" id="PTHR32370">
    <property type="entry name" value="OS12G0117600 PROTEIN"/>
    <property type="match status" value="1"/>
</dbReference>
<dbReference type="Pfam" id="PF00651">
    <property type="entry name" value="BTB"/>
    <property type="match status" value="1"/>
</dbReference>
<dbReference type="Pfam" id="PF03000">
    <property type="entry name" value="NPH3"/>
    <property type="match status" value="1"/>
</dbReference>
<dbReference type="SMART" id="SM00225">
    <property type="entry name" value="BTB"/>
    <property type="match status" value="1"/>
</dbReference>
<dbReference type="SUPFAM" id="SSF54695">
    <property type="entry name" value="POZ domain"/>
    <property type="match status" value="1"/>
</dbReference>
<dbReference type="PROSITE" id="PS50097">
    <property type="entry name" value="BTB"/>
    <property type="match status" value="1"/>
</dbReference>
<dbReference type="PROSITE" id="PS51649">
    <property type="entry name" value="NPH3"/>
    <property type="match status" value="1"/>
</dbReference>
<sequence>MGIISDNAQSHSSSSAPAPSIFSSSFATRIFSDVAGDITIVVDGESFLLHKFPLVARCGKIRKMVAEMKESSSNLSHTELRDFPGGSKTFELAMKFCYGINFEITISNVVAIRCAAGYLEMTEDFKEENLIARTETYLEQVAFRSLEKSVEVLCSCETLYPQDIAETAHIPDRCVEAIAVNACREQLVLGLSRLNRGTESGELKRGDSPEWWIEDLSALRIDYYARVVSAMARTGLRSESIITSLMHYAQESLKGIRNCKERTKLDSGTFENEQRNVLEAIVSLFPNDNVPLSFLFGMLRVGITINVAISCRLELERRIAQQLETVSLDDLLIPVVRDGDSMYDVDTVHRILVCFLKKIEEEEEYDEDCCYENETENLTGSMCHSSLLKVGRIMDAYLAEIAPDPCLSLHKFMALIEILPDYARVMDDGLYRAIDMFLKGHPSLNEQECKSLCKFIDTQKLSQEACNHVAQNDRLPMQMVVRVLYSEQLRMKNVMSGESGEGLLLSSQKHSSENPSRAVSPRDTYASLRRENRELKLEISRVRVRLTELEKEQILMKQGMMEKSGHGGTLLTSLSKGIGRISIFGGGPTEGKLRNANRKSKSRLERKTVRSRPESMF</sequence>
<comment type="function">
    <text evidence="1">May act as a substrate-specific adapter of an E3 ubiquitin-protein ligase complex (CUL3-RBX1-BTB) which mediates the ubiquitination and subsequent proteasomal degradation of target proteins.</text>
</comment>
<comment type="pathway">
    <text>Protein modification; protein ubiquitination.</text>
</comment>
<comment type="domain">
    <text evidence="6">The BTB/POZ domain mediates the interaction with some component of ubiquitin ligase complexes.</text>
</comment>
<comment type="similarity">
    <text evidence="4">Belongs to the NPH3 family.</text>
</comment>
<comment type="sequence caution" evidence="7">
    <conflict type="erroneous gene model prediction">
        <sequence resource="EMBL-CDS" id="AAG51355"/>
    </conflict>
</comment>
<gene>
    <name type="ordered locus">At3g08570</name>
    <name type="ORF">F17O14.4</name>
</gene>
<evidence type="ECO:0000250" key="1"/>
<evidence type="ECO:0000250" key="2">
    <source>
        <dbReference type="UniProtKB" id="Q9FMF5"/>
    </source>
</evidence>
<evidence type="ECO:0000255" key="3">
    <source>
        <dbReference type="PROSITE-ProRule" id="PRU00037"/>
    </source>
</evidence>
<evidence type="ECO:0000255" key="4">
    <source>
        <dbReference type="PROSITE-ProRule" id="PRU00982"/>
    </source>
</evidence>
<evidence type="ECO:0000256" key="5">
    <source>
        <dbReference type="SAM" id="MobiDB-lite"/>
    </source>
</evidence>
<evidence type="ECO:0000269" key="6">
    <source>
    </source>
</evidence>
<evidence type="ECO:0000305" key="7"/>
<keyword id="KW-0597">Phosphoprotein</keyword>
<keyword id="KW-1185">Reference proteome</keyword>
<keyword id="KW-0833">Ubl conjugation pathway</keyword>
<protein>
    <recommendedName>
        <fullName>BTB/POZ domain-containing protein At3g08570</fullName>
    </recommendedName>
</protein>
<proteinExistence type="evidence at transcript level"/>
<name>Y3857_ARATH</name>